<gene>
    <name evidence="1" type="primary">hisA</name>
    <name type="ordered locus">Suden_1673</name>
</gene>
<name>HIS4_SULDN</name>
<reference key="1">
    <citation type="journal article" date="2008" name="Appl. Environ. Microbiol.">
        <title>Genome of the epsilonproteobacterial chemolithoautotroph Sulfurimonas denitrificans.</title>
        <authorList>
            <person name="Sievert S.M."/>
            <person name="Scott K.M."/>
            <person name="Klotz M.G."/>
            <person name="Chain P.S.G."/>
            <person name="Hauser L.J."/>
            <person name="Hemp J."/>
            <person name="Huegler M."/>
            <person name="Land M."/>
            <person name="Lapidus A."/>
            <person name="Larimer F.W."/>
            <person name="Lucas S."/>
            <person name="Malfatti S.A."/>
            <person name="Meyer F."/>
            <person name="Paulsen I.T."/>
            <person name="Ren Q."/>
            <person name="Simon J."/>
            <person name="Bailey K."/>
            <person name="Diaz E."/>
            <person name="Fitzpatrick K.A."/>
            <person name="Glover B."/>
            <person name="Gwatney N."/>
            <person name="Korajkic A."/>
            <person name="Long A."/>
            <person name="Mobberley J.M."/>
            <person name="Pantry S.N."/>
            <person name="Pazder G."/>
            <person name="Peterson S."/>
            <person name="Quintanilla J.D."/>
            <person name="Sprinkle R."/>
            <person name="Stephens J."/>
            <person name="Thomas P."/>
            <person name="Vaughn R."/>
            <person name="Weber M.J."/>
            <person name="Wooten L.L."/>
        </authorList>
    </citation>
    <scope>NUCLEOTIDE SEQUENCE [LARGE SCALE GENOMIC DNA]</scope>
    <source>
        <strain>ATCC 33889 / DSM 1251</strain>
    </source>
</reference>
<protein>
    <recommendedName>
        <fullName evidence="1">1-(5-phosphoribosyl)-5-[(5-phosphoribosylamino)methylideneamino] imidazole-4-carboxamide isomerase</fullName>
        <ecNumber evidence="1">5.3.1.16</ecNumber>
    </recommendedName>
    <alternativeName>
        <fullName evidence="1">Phosphoribosylformimino-5-aminoimidazole carboxamide ribotide isomerase</fullName>
    </alternativeName>
</protein>
<comment type="catalytic activity">
    <reaction evidence="1">
        <text>1-(5-phospho-beta-D-ribosyl)-5-[(5-phospho-beta-D-ribosylamino)methylideneamino]imidazole-4-carboxamide = 5-[(5-phospho-1-deoxy-D-ribulos-1-ylimino)methylamino]-1-(5-phospho-beta-D-ribosyl)imidazole-4-carboxamide</text>
        <dbReference type="Rhea" id="RHEA:15469"/>
        <dbReference type="ChEBI" id="CHEBI:58435"/>
        <dbReference type="ChEBI" id="CHEBI:58525"/>
        <dbReference type="EC" id="5.3.1.16"/>
    </reaction>
</comment>
<comment type="pathway">
    <text evidence="1">Amino-acid biosynthesis; L-histidine biosynthesis; L-histidine from 5-phospho-alpha-D-ribose 1-diphosphate: step 4/9.</text>
</comment>
<comment type="subcellular location">
    <subcellularLocation>
        <location evidence="1">Cytoplasm</location>
    </subcellularLocation>
</comment>
<comment type="similarity">
    <text evidence="1">Belongs to the HisA/HisF family.</text>
</comment>
<organism>
    <name type="scientific">Sulfurimonas denitrificans (strain ATCC 33889 / DSM 1251)</name>
    <name type="common">Thiomicrospira denitrificans (strain ATCC 33889 / DSM 1251)</name>
    <dbReference type="NCBI Taxonomy" id="326298"/>
    <lineage>
        <taxon>Bacteria</taxon>
        <taxon>Pseudomonadati</taxon>
        <taxon>Campylobacterota</taxon>
        <taxon>Epsilonproteobacteria</taxon>
        <taxon>Campylobacterales</taxon>
        <taxon>Sulfurimonadaceae</taxon>
        <taxon>Sulfurimonas</taxon>
    </lineage>
</organism>
<evidence type="ECO:0000255" key="1">
    <source>
        <dbReference type="HAMAP-Rule" id="MF_01014"/>
    </source>
</evidence>
<proteinExistence type="inferred from homology"/>
<dbReference type="EC" id="5.3.1.16" evidence="1"/>
<dbReference type="EMBL" id="CP000153">
    <property type="protein sequence ID" value="ABB44950.1"/>
    <property type="molecule type" value="Genomic_DNA"/>
</dbReference>
<dbReference type="RefSeq" id="WP_011373291.1">
    <property type="nucleotide sequence ID" value="NC_007575.1"/>
</dbReference>
<dbReference type="SMR" id="Q30PY1"/>
<dbReference type="STRING" id="326298.Suden_1673"/>
<dbReference type="KEGG" id="tdn:Suden_1673"/>
<dbReference type="eggNOG" id="COG0106">
    <property type="taxonomic scope" value="Bacteria"/>
</dbReference>
<dbReference type="HOGENOM" id="CLU_048577_1_2_7"/>
<dbReference type="OrthoDB" id="9807749at2"/>
<dbReference type="UniPathway" id="UPA00031">
    <property type="reaction ID" value="UER00009"/>
</dbReference>
<dbReference type="Proteomes" id="UP000002714">
    <property type="component" value="Chromosome"/>
</dbReference>
<dbReference type="GO" id="GO:0005737">
    <property type="term" value="C:cytoplasm"/>
    <property type="evidence" value="ECO:0007669"/>
    <property type="project" value="UniProtKB-SubCell"/>
</dbReference>
<dbReference type="GO" id="GO:0003949">
    <property type="term" value="F:1-(5-phosphoribosyl)-5-[(5-phosphoribosylamino)methylideneamino]imidazole-4-carboxamide isomerase activity"/>
    <property type="evidence" value="ECO:0007669"/>
    <property type="project" value="UniProtKB-UniRule"/>
</dbReference>
<dbReference type="GO" id="GO:0000105">
    <property type="term" value="P:L-histidine biosynthetic process"/>
    <property type="evidence" value="ECO:0007669"/>
    <property type="project" value="UniProtKB-UniRule"/>
</dbReference>
<dbReference type="GO" id="GO:0000162">
    <property type="term" value="P:L-tryptophan biosynthetic process"/>
    <property type="evidence" value="ECO:0007669"/>
    <property type="project" value="TreeGrafter"/>
</dbReference>
<dbReference type="CDD" id="cd04732">
    <property type="entry name" value="HisA"/>
    <property type="match status" value="1"/>
</dbReference>
<dbReference type="FunFam" id="3.20.20.70:FF:000009">
    <property type="entry name" value="1-(5-phosphoribosyl)-5-[(5-phosphoribosylamino)methylideneamino] imidazole-4-carboxamide isomerase"/>
    <property type="match status" value="1"/>
</dbReference>
<dbReference type="Gene3D" id="3.20.20.70">
    <property type="entry name" value="Aldolase class I"/>
    <property type="match status" value="1"/>
</dbReference>
<dbReference type="HAMAP" id="MF_01014">
    <property type="entry name" value="HisA"/>
    <property type="match status" value="1"/>
</dbReference>
<dbReference type="InterPro" id="IPR013785">
    <property type="entry name" value="Aldolase_TIM"/>
</dbReference>
<dbReference type="InterPro" id="IPR006062">
    <property type="entry name" value="His_biosynth"/>
</dbReference>
<dbReference type="InterPro" id="IPR006063">
    <property type="entry name" value="HisA_bact_arch"/>
</dbReference>
<dbReference type="InterPro" id="IPR044524">
    <property type="entry name" value="Isoase_HisA-like"/>
</dbReference>
<dbReference type="InterPro" id="IPR023016">
    <property type="entry name" value="Isoase_HisA-like_bact"/>
</dbReference>
<dbReference type="InterPro" id="IPR011060">
    <property type="entry name" value="RibuloseP-bd_barrel"/>
</dbReference>
<dbReference type="NCBIfam" id="TIGR00007">
    <property type="entry name" value="1-(5-phosphoribosyl)-5-[(5-phosphoribosylamino)methylideneamino]imidazole-4-carboxamide isomerase"/>
    <property type="match status" value="1"/>
</dbReference>
<dbReference type="PANTHER" id="PTHR43090">
    <property type="entry name" value="1-(5-PHOSPHORIBOSYL)-5-[(5-PHOSPHORIBOSYLAMINO)METHYLIDENEAMINO] IMIDAZOLE-4-CARBOXAMIDE ISOMERASE"/>
    <property type="match status" value="1"/>
</dbReference>
<dbReference type="PANTHER" id="PTHR43090:SF2">
    <property type="entry name" value="1-(5-PHOSPHORIBOSYL)-5-[(5-PHOSPHORIBOSYLAMINO)METHYLIDENEAMINO] IMIDAZOLE-4-CARBOXAMIDE ISOMERASE"/>
    <property type="match status" value="1"/>
</dbReference>
<dbReference type="Pfam" id="PF00977">
    <property type="entry name" value="His_biosynth"/>
    <property type="match status" value="1"/>
</dbReference>
<dbReference type="SUPFAM" id="SSF51366">
    <property type="entry name" value="Ribulose-phoshate binding barrel"/>
    <property type="match status" value="1"/>
</dbReference>
<feature type="chain" id="PRO_0000229092" description="1-(5-phosphoribosyl)-5-[(5-phosphoribosylamino)methylideneamino] imidazole-4-carboxamide isomerase">
    <location>
        <begin position="1"/>
        <end position="236"/>
    </location>
</feature>
<feature type="active site" description="Proton acceptor" evidence="1">
    <location>
        <position position="8"/>
    </location>
</feature>
<feature type="active site" description="Proton donor" evidence="1">
    <location>
        <position position="127"/>
    </location>
</feature>
<keyword id="KW-0028">Amino-acid biosynthesis</keyword>
<keyword id="KW-0963">Cytoplasm</keyword>
<keyword id="KW-0368">Histidine biosynthesis</keyword>
<keyword id="KW-0413">Isomerase</keyword>
<keyword id="KW-1185">Reference proteome</keyword>
<accession>Q30PY1</accession>
<sequence length="236" mass="25520">MTLYPAIDLKDGKAVRLTKGLMDSAKIYSDEPWMLVKKFEEMGAKWVHLVDLNGAFAGEPKNLEQIIKIRQNCKVKLELGGGIRDEDTIKKMLEIGIDRVILGSIAVKNPTFVKEMAAKYPIAVGIDAIDGFVAVEGWGEVSAMRATDLAKEFANAGVEAIICTDVSRDGTLSGVNVEFTLDIANACKIPTIASGGVKDESDIEALVSAKGIDGVIIGKAYYEGTLDLPKMFKKYS</sequence>